<organism>
    <name type="scientific">Escherichia coli (strain K12 / MC4100 / BW2952)</name>
    <dbReference type="NCBI Taxonomy" id="595496"/>
    <lineage>
        <taxon>Bacteria</taxon>
        <taxon>Pseudomonadati</taxon>
        <taxon>Pseudomonadota</taxon>
        <taxon>Gammaproteobacteria</taxon>
        <taxon>Enterobacterales</taxon>
        <taxon>Enterobacteriaceae</taxon>
        <taxon>Escherichia</taxon>
    </lineage>
</organism>
<dbReference type="EC" id="3.1.3.-" evidence="1"/>
<dbReference type="EMBL" id="CP001396">
    <property type="protein sequence ID" value="ACR65263.1"/>
    <property type="molecule type" value="Genomic_DNA"/>
</dbReference>
<dbReference type="RefSeq" id="WP_000283667.1">
    <property type="nucleotide sequence ID" value="NC_012759.1"/>
</dbReference>
<dbReference type="SMR" id="C4ZRX5"/>
<dbReference type="GeneID" id="75203622"/>
<dbReference type="KEGG" id="ebw:BWG_0883"/>
<dbReference type="HOGENOM" id="CLU_061999_0_1_6"/>
<dbReference type="GO" id="GO:0005829">
    <property type="term" value="C:cytosol"/>
    <property type="evidence" value="ECO:0007669"/>
    <property type="project" value="TreeGrafter"/>
</dbReference>
<dbReference type="GO" id="GO:0016791">
    <property type="term" value="F:phosphatase activity"/>
    <property type="evidence" value="ECO:0007669"/>
    <property type="project" value="UniProtKB-UniRule"/>
</dbReference>
<dbReference type="GO" id="GO:0008270">
    <property type="term" value="F:zinc ion binding"/>
    <property type="evidence" value="ECO:0007669"/>
    <property type="project" value="UniProtKB-UniRule"/>
</dbReference>
<dbReference type="GO" id="GO:0071978">
    <property type="term" value="P:bacterial-type flagellum-dependent swarming motility"/>
    <property type="evidence" value="ECO:0007669"/>
    <property type="project" value="TreeGrafter"/>
</dbReference>
<dbReference type="CDD" id="cd07437">
    <property type="entry name" value="PHP_HisPPase_Ycdx_like"/>
    <property type="match status" value="1"/>
</dbReference>
<dbReference type="FunFam" id="3.20.20.140:FF:000008">
    <property type="entry name" value="Probable phosphatase YcdX"/>
    <property type="match status" value="1"/>
</dbReference>
<dbReference type="Gene3D" id="3.20.20.140">
    <property type="entry name" value="Metal-dependent hydrolases"/>
    <property type="match status" value="1"/>
</dbReference>
<dbReference type="HAMAP" id="MF_01561">
    <property type="entry name" value="YcdX_phosphat"/>
    <property type="match status" value="1"/>
</dbReference>
<dbReference type="InterPro" id="IPR023710">
    <property type="entry name" value="Phosphatase_YcdX_put"/>
</dbReference>
<dbReference type="InterPro" id="IPR004013">
    <property type="entry name" value="PHP_dom"/>
</dbReference>
<dbReference type="InterPro" id="IPR050243">
    <property type="entry name" value="PHP_phosphatase"/>
</dbReference>
<dbReference type="InterPro" id="IPR003141">
    <property type="entry name" value="Pol/His_phosphatase_N"/>
</dbReference>
<dbReference type="InterPro" id="IPR016195">
    <property type="entry name" value="Pol/histidinol_Pase-like"/>
</dbReference>
<dbReference type="NCBIfam" id="NF006702">
    <property type="entry name" value="PRK09248.1"/>
    <property type="match status" value="1"/>
</dbReference>
<dbReference type="PANTHER" id="PTHR36928">
    <property type="entry name" value="PHOSPHATASE YCDX-RELATED"/>
    <property type="match status" value="1"/>
</dbReference>
<dbReference type="PANTHER" id="PTHR36928:SF1">
    <property type="entry name" value="PHOSPHATASE YCDX-RELATED"/>
    <property type="match status" value="1"/>
</dbReference>
<dbReference type="Pfam" id="PF02811">
    <property type="entry name" value="PHP"/>
    <property type="match status" value="1"/>
</dbReference>
<dbReference type="SMART" id="SM00481">
    <property type="entry name" value="POLIIIAc"/>
    <property type="match status" value="1"/>
</dbReference>
<dbReference type="SUPFAM" id="SSF89550">
    <property type="entry name" value="PHP domain-like"/>
    <property type="match status" value="1"/>
</dbReference>
<proteinExistence type="inferred from homology"/>
<reference key="1">
    <citation type="journal article" date="2009" name="J. Bacteriol.">
        <title>Genomic sequencing reveals regulatory mutations and recombinational events in the widely used MC4100 lineage of Escherichia coli K-12.</title>
        <authorList>
            <person name="Ferenci T."/>
            <person name="Zhou Z."/>
            <person name="Betteridge T."/>
            <person name="Ren Y."/>
            <person name="Liu Y."/>
            <person name="Feng L."/>
            <person name="Reeves P.R."/>
            <person name="Wang L."/>
        </authorList>
    </citation>
    <scope>NUCLEOTIDE SEQUENCE [LARGE SCALE GENOMIC DNA]</scope>
    <source>
        <strain>K12 / MC4100 / BW2952</strain>
    </source>
</reference>
<feature type="chain" id="PRO_1000215507" description="Probable phosphatase YcdX">
    <location>
        <begin position="1"/>
        <end position="245"/>
    </location>
</feature>
<feature type="binding site" evidence="1">
    <location>
        <position position="7"/>
    </location>
    <ligand>
        <name>Zn(2+)</name>
        <dbReference type="ChEBI" id="CHEBI:29105"/>
        <label>1</label>
    </ligand>
</feature>
<feature type="binding site" evidence="1">
    <location>
        <position position="9"/>
    </location>
    <ligand>
        <name>Zn(2+)</name>
        <dbReference type="ChEBI" id="CHEBI:29105"/>
        <label>1</label>
    </ligand>
</feature>
<feature type="binding site" evidence="1">
    <location>
        <position position="15"/>
    </location>
    <ligand>
        <name>Zn(2+)</name>
        <dbReference type="ChEBI" id="CHEBI:29105"/>
        <label>2</label>
    </ligand>
</feature>
<feature type="binding site" evidence="1">
    <location>
        <position position="40"/>
    </location>
    <ligand>
        <name>Zn(2+)</name>
        <dbReference type="ChEBI" id="CHEBI:29105"/>
        <label>2</label>
    </ligand>
</feature>
<feature type="binding site" evidence="1">
    <location>
        <position position="73"/>
    </location>
    <ligand>
        <name>Zn(2+)</name>
        <dbReference type="ChEBI" id="CHEBI:29105"/>
        <label>1</label>
    </ligand>
</feature>
<feature type="binding site" evidence="1">
    <location>
        <position position="73"/>
    </location>
    <ligand>
        <name>Zn(2+)</name>
        <dbReference type="ChEBI" id="CHEBI:29105"/>
        <label>3</label>
    </ligand>
</feature>
<feature type="binding site" evidence="1">
    <location>
        <position position="101"/>
    </location>
    <ligand>
        <name>Zn(2+)</name>
        <dbReference type="ChEBI" id="CHEBI:29105"/>
        <label>3</label>
    </ligand>
</feature>
<feature type="binding site" evidence="1">
    <location>
        <position position="131"/>
    </location>
    <ligand>
        <name>Zn(2+)</name>
        <dbReference type="ChEBI" id="CHEBI:29105"/>
        <label>3</label>
    </ligand>
</feature>
<feature type="binding site" evidence="1">
    <location>
        <position position="192"/>
    </location>
    <ligand>
        <name>Zn(2+)</name>
        <dbReference type="ChEBI" id="CHEBI:29105"/>
        <label>1</label>
    </ligand>
</feature>
<feature type="binding site" evidence="1">
    <location>
        <position position="194"/>
    </location>
    <ligand>
        <name>Zn(2+)</name>
        <dbReference type="ChEBI" id="CHEBI:29105"/>
        <label>2</label>
    </ligand>
</feature>
<gene>
    <name evidence="1" type="primary">ycdX</name>
    <name type="ordered locus">BWG_0883</name>
</gene>
<accession>C4ZRX5</accession>
<name>YCDX_ECOBW</name>
<sequence length="245" mass="26891">MYPVDLHMHTVASTHAYSTLSDYIAQAKQKGIKLFAITDHGPDMEDAPHHWHFINMRIWPRVVDGVGILRGIEANIKNVDGEIDCSGKMFDSLDLIIAGFHEPVFAPHDKATNTQAMIATIASGNVHIISHPGNPKYEIDVKAVAEAAAKHQVALEINNSSFLHSRKGSEDNCREVAAAVRDAGGWVALGSDSHTAFTMGEFEECLKILDAVDFPPERILNVSPRRLLNFLESRGMAPIAEFADL</sequence>
<comment type="cofactor">
    <cofactor evidence="1">
        <name>Zn(2+)</name>
        <dbReference type="ChEBI" id="CHEBI:29105"/>
    </cofactor>
    <text evidence="1">Binds 3 Zn(2+) ions per subunit.</text>
</comment>
<comment type="subunit">
    <text evidence="1">Homotrimer.</text>
</comment>
<comment type="similarity">
    <text evidence="1">Belongs to the PHP family.</text>
</comment>
<evidence type="ECO:0000255" key="1">
    <source>
        <dbReference type="HAMAP-Rule" id="MF_01561"/>
    </source>
</evidence>
<keyword id="KW-0378">Hydrolase</keyword>
<keyword id="KW-0479">Metal-binding</keyword>
<keyword id="KW-0862">Zinc</keyword>
<protein>
    <recommendedName>
        <fullName evidence="1">Probable phosphatase YcdX</fullName>
        <ecNumber evidence="1">3.1.3.-</ecNumber>
    </recommendedName>
</protein>